<evidence type="ECO:0000255" key="1">
    <source>
        <dbReference type="HAMAP-Rule" id="MF_00391"/>
    </source>
</evidence>
<evidence type="ECO:0000256" key="2">
    <source>
        <dbReference type="SAM" id="MobiDB-lite"/>
    </source>
</evidence>
<evidence type="ECO:0000305" key="3"/>
<comment type="similarity">
    <text evidence="1">Belongs to the bacterial ribosomal protein bL34 family.</text>
</comment>
<reference key="1">
    <citation type="journal article" date="2006" name="PLoS Genet.">
        <title>The complete genome sequence and comparative genome analysis of the high pathogenicity Yersinia enterocolitica strain 8081.</title>
        <authorList>
            <person name="Thomson N.R."/>
            <person name="Howard S."/>
            <person name="Wren B.W."/>
            <person name="Holden M.T.G."/>
            <person name="Crossman L."/>
            <person name="Challis G.L."/>
            <person name="Churcher C."/>
            <person name="Mungall K."/>
            <person name="Brooks K."/>
            <person name="Chillingworth T."/>
            <person name="Feltwell T."/>
            <person name="Abdellah Z."/>
            <person name="Hauser H."/>
            <person name="Jagels K."/>
            <person name="Maddison M."/>
            <person name="Moule S."/>
            <person name="Sanders M."/>
            <person name="Whitehead S."/>
            <person name="Quail M.A."/>
            <person name="Dougan G."/>
            <person name="Parkhill J."/>
            <person name="Prentice M.B."/>
        </authorList>
    </citation>
    <scope>NUCLEOTIDE SEQUENCE [LARGE SCALE GENOMIC DNA]</scope>
    <source>
        <strain>NCTC 13174 / 8081</strain>
    </source>
</reference>
<feature type="chain" id="PRO_1000013495" description="Large ribosomal subunit protein bL34">
    <location>
        <begin position="1"/>
        <end position="46"/>
    </location>
</feature>
<feature type="region of interest" description="Disordered" evidence="2">
    <location>
        <begin position="26"/>
        <end position="46"/>
    </location>
</feature>
<feature type="compositionally biased region" description="Basic residues" evidence="2">
    <location>
        <begin position="31"/>
        <end position="40"/>
    </location>
</feature>
<name>RL34_YERE8</name>
<organism>
    <name type="scientific">Yersinia enterocolitica serotype O:8 / biotype 1B (strain NCTC 13174 / 8081)</name>
    <dbReference type="NCBI Taxonomy" id="393305"/>
    <lineage>
        <taxon>Bacteria</taxon>
        <taxon>Pseudomonadati</taxon>
        <taxon>Pseudomonadota</taxon>
        <taxon>Gammaproteobacteria</taxon>
        <taxon>Enterobacterales</taxon>
        <taxon>Yersiniaceae</taxon>
        <taxon>Yersinia</taxon>
    </lineage>
</organism>
<proteinExistence type="inferred from homology"/>
<gene>
    <name evidence="1" type="primary">rpmH</name>
    <name type="ordered locus">YE4175</name>
</gene>
<accession>A1JT83</accession>
<keyword id="KW-0687">Ribonucleoprotein</keyword>
<keyword id="KW-0689">Ribosomal protein</keyword>
<dbReference type="EMBL" id="AM286415">
    <property type="protein sequence ID" value="CAL14191.1"/>
    <property type="molecule type" value="Genomic_DNA"/>
</dbReference>
<dbReference type="RefSeq" id="WP_002220736.1">
    <property type="nucleotide sequence ID" value="NC_008800.1"/>
</dbReference>
<dbReference type="RefSeq" id="YP_001008309.1">
    <property type="nucleotide sequence ID" value="NC_008800.1"/>
</dbReference>
<dbReference type="SMR" id="A1JT83"/>
<dbReference type="GeneID" id="97458397"/>
<dbReference type="KEGG" id="yen:YE4175"/>
<dbReference type="PATRIC" id="fig|393305.7.peg.4442"/>
<dbReference type="eggNOG" id="COG0230">
    <property type="taxonomic scope" value="Bacteria"/>
</dbReference>
<dbReference type="HOGENOM" id="CLU_129938_2_1_6"/>
<dbReference type="OrthoDB" id="9804164at2"/>
<dbReference type="Proteomes" id="UP000000642">
    <property type="component" value="Chromosome"/>
</dbReference>
<dbReference type="GO" id="GO:1990904">
    <property type="term" value="C:ribonucleoprotein complex"/>
    <property type="evidence" value="ECO:0007669"/>
    <property type="project" value="UniProtKB-KW"/>
</dbReference>
<dbReference type="GO" id="GO:0005840">
    <property type="term" value="C:ribosome"/>
    <property type="evidence" value="ECO:0007669"/>
    <property type="project" value="UniProtKB-KW"/>
</dbReference>
<dbReference type="GO" id="GO:0003735">
    <property type="term" value="F:structural constituent of ribosome"/>
    <property type="evidence" value="ECO:0007669"/>
    <property type="project" value="InterPro"/>
</dbReference>
<dbReference type="GO" id="GO:0006412">
    <property type="term" value="P:translation"/>
    <property type="evidence" value="ECO:0007669"/>
    <property type="project" value="UniProtKB-UniRule"/>
</dbReference>
<dbReference type="FunFam" id="1.10.287.3980:FF:000001">
    <property type="entry name" value="Mitochondrial ribosomal protein L34"/>
    <property type="match status" value="1"/>
</dbReference>
<dbReference type="Gene3D" id="1.10.287.3980">
    <property type="match status" value="1"/>
</dbReference>
<dbReference type="HAMAP" id="MF_00391">
    <property type="entry name" value="Ribosomal_bL34"/>
    <property type="match status" value="1"/>
</dbReference>
<dbReference type="InterPro" id="IPR000271">
    <property type="entry name" value="Ribosomal_bL34"/>
</dbReference>
<dbReference type="InterPro" id="IPR020939">
    <property type="entry name" value="Ribosomal_bL34_CS"/>
</dbReference>
<dbReference type="NCBIfam" id="TIGR01030">
    <property type="entry name" value="rpmH_bact"/>
    <property type="match status" value="1"/>
</dbReference>
<dbReference type="PANTHER" id="PTHR14503:SF4">
    <property type="entry name" value="LARGE RIBOSOMAL SUBUNIT PROTEIN BL34M"/>
    <property type="match status" value="1"/>
</dbReference>
<dbReference type="PANTHER" id="PTHR14503">
    <property type="entry name" value="MITOCHONDRIAL RIBOSOMAL PROTEIN 34 FAMILY MEMBER"/>
    <property type="match status" value="1"/>
</dbReference>
<dbReference type="Pfam" id="PF00468">
    <property type="entry name" value="Ribosomal_L34"/>
    <property type="match status" value="1"/>
</dbReference>
<dbReference type="PROSITE" id="PS00784">
    <property type="entry name" value="RIBOSOMAL_L34"/>
    <property type="match status" value="1"/>
</dbReference>
<protein>
    <recommendedName>
        <fullName evidence="1">Large ribosomal subunit protein bL34</fullName>
    </recommendedName>
    <alternativeName>
        <fullName evidence="3">50S ribosomal protein L34</fullName>
    </alternativeName>
</protein>
<sequence>MKRTFQPSVLKRNRSHGFRARMATKNGRQVLARRRAKSRSRLTVSK</sequence>